<gene>
    <name type="primary">LRRIQ4</name>
    <name type="synonym">LRRC64</name>
</gene>
<evidence type="ECO:0000255" key="1">
    <source>
        <dbReference type="PROSITE-ProRule" id="PRU00116"/>
    </source>
</evidence>
<evidence type="ECO:0000256" key="2">
    <source>
        <dbReference type="SAM" id="MobiDB-lite"/>
    </source>
</evidence>
<feature type="chain" id="PRO_0000332138" description="Leucine-rich repeat and IQ domain-containing protein 4">
    <location>
        <begin position="1"/>
        <end position="560"/>
    </location>
</feature>
<feature type="repeat" description="LRR 1">
    <location>
        <begin position="23"/>
        <end position="47"/>
    </location>
</feature>
<feature type="repeat" description="LRR 2">
    <location>
        <begin position="48"/>
        <end position="70"/>
    </location>
</feature>
<feature type="repeat" description="LRR 3">
    <location>
        <begin position="72"/>
        <end position="95"/>
    </location>
</feature>
<feature type="repeat" description="LRR 4">
    <location>
        <begin position="97"/>
        <end position="116"/>
    </location>
</feature>
<feature type="repeat" description="LRR 5">
    <location>
        <begin position="117"/>
        <end position="140"/>
    </location>
</feature>
<feature type="repeat" description="LRR 6">
    <location>
        <begin position="141"/>
        <end position="164"/>
    </location>
</feature>
<feature type="repeat" description="LRR 7">
    <location>
        <begin position="166"/>
        <end position="187"/>
    </location>
</feature>
<feature type="repeat" description="LRR 8">
    <location>
        <begin position="188"/>
        <end position="210"/>
    </location>
</feature>
<feature type="repeat" description="LRR 9">
    <location>
        <begin position="212"/>
        <end position="233"/>
    </location>
</feature>
<feature type="repeat" description="LRR 10">
    <location>
        <begin position="234"/>
        <end position="256"/>
    </location>
</feature>
<feature type="repeat" description="LRR 11">
    <location>
        <begin position="258"/>
        <end position="281"/>
    </location>
</feature>
<feature type="repeat" description="LRR 12">
    <location>
        <begin position="283"/>
        <end position="301"/>
    </location>
</feature>
<feature type="repeat" description="LRR 13">
    <location>
        <begin position="302"/>
        <end position="325"/>
    </location>
</feature>
<feature type="repeat" description="LRR 14">
    <location>
        <begin position="326"/>
        <end position="348"/>
    </location>
</feature>
<feature type="repeat" description="LRR 15">
    <location>
        <begin position="350"/>
        <end position="371"/>
    </location>
</feature>
<feature type="repeat" description="LRR 16">
    <location>
        <begin position="374"/>
        <end position="397"/>
    </location>
</feature>
<feature type="repeat" description="LRR 17">
    <location>
        <begin position="398"/>
        <end position="422"/>
    </location>
</feature>
<feature type="repeat" description="LRR 18">
    <location>
        <begin position="424"/>
        <end position="443"/>
    </location>
</feature>
<feature type="repeat" description="LRR 19">
    <location>
        <begin position="444"/>
        <end position="466"/>
    </location>
</feature>
<feature type="repeat" description="LRR 20">
    <location>
        <begin position="468"/>
        <end position="489"/>
    </location>
</feature>
<feature type="domain" description="IQ" evidence="1">
    <location>
        <begin position="504"/>
        <end position="533"/>
    </location>
</feature>
<feature type="region of interest" description="Disordered" evidence="2">
    <location>
        <begin position="1"/>
        <end position="20"/>
    </location>
</feature>
<feature type="region of interest" description="Disordered" evidence="2">
    <location>
        <begin position="529"/>
        <end position="560"/>
    </location>
</feature>
<feature type="compositionally biased region" description="Basic residues" evidence="2">
    <location>
        <begin position="533"/>
        <end position="560"/>
    </location>
</feature>
<feature type="sequence variant" id="VAR_042953" description="In dbSNP:rs16854411.">
    <original>K</original>
    <variation>E</variation>
    <location>
        <position position="159"/>
    </location>
</feature>
<keyword id="KW-0433">Leucine-rich repeat</keyword>
<keyword id="KW-1267">Proteomics identification</keyword>
<keyword id="KW-1185">Reference proteome</keyword>
<keyword id="KW-0677">Repeat</keyword>
<proteinExistence type="evidence at protein level"/>
<organism>
    <name type="scientific">Homo sapiens</name>
    <name type="common">Human</name>
    <dbReference type="NCBI Taxonomy" id="9606"/>
    <lineage>
        <taxon>Eukaryota</taxon>
        <taxon>Metazoa</taxon>
        <taxon>Chordata</taxon>
        <taxon>Craniata</taxon>
        <taxon>Vertebrata</taxon>
        <taxon>Euteleostomi</taxon>
        <taxon>Mammalia</taxon>
        <taxon>Eutheria</taxon>
        <taxon>Euarchontoglires</taxon>
        <taxon>Primates</taxon>
        <taxon>Haplorrhini</taxon>
        <taxon>Catarrhini</taxon>
        <taxon>Hominidae</taxon>
        <taxon>Homo</taxon>
    </lineage>
</organism>
<protein>
    <recommendedName>
        <fullName>Leucine-rich repeat and IQ domain-containing protein 4</fullName>
    </recommendedName>
    <alternativeName>
        <fullName>Leucine-rich repeat-containing protein 64</fullName>
    </alternativeName>
</protein>
<accession>A6NIV6</accession>
<sequence>MSKDIKSVEHSPKIHQRNDPQHVNDRTFFIDASNQSLTAIPLEIFTFTELEEVHLENNQIEEIPQEIQRLKNIRVLYLDKNNLRSLCPALGLLSSLESLDLSYNPIFSSSLVVVSFLHALRELRLYQTDLKEIPVVIFKNLHHLELLGLTGNHLKCLPKEIVNQTKLREIYLKRNQFEVFPQELCVLYTLEIIDLDENKIGAIPEEIGHLTGLQKFYMASNNLPVLPASLCQCSQLSVLDLSHNLLHSIPKSFAELRKMTEIGLSGNRLEKVPRLICRWTSLHLLYLGNTGLHRLRGSFRCLVNLRFLDLSQNHLHHCPLQICALKNLEVLGLDDNKIGQLPSELGSLSKLKILGLTGNEFLSFPEEVLSLASLEKLYIGQDQGFKLTYVPEHIRKLQSLKELYIENNHLEYLPVSLGSMPNLEVLDCRHNLLKQLPDAICQAQALKELRLEDNLLTHLPENLDSLVNLKVLTLMDNPMEEPPKEVCAEGNEAIWKYLKENRNRNIMATKIQAWWRGTMVQRGFGKFGELLKPQKKGKTSPKDKKGKKDVKGKPGKGKKK</sequence>
<name>LRIQ4_HUMAN</name>
<reference key="1">
    <citation type="journal article" date="2006" name="Nature">
        <title>The DNA sequence, annotation and analysis of human chromosome 3.</title>
        <authorList>
            <person name="Muzny D.M."/>
            <person name="Scherer S.E."/>
            <person name="Kaul R."/>
            <person name="Wang J."/>
            <person name="Yu J."/>
            <person name="Sudbrak R."/>
            <person name="Buhay C.J."/>
            <person name="Chen R."/>
            <person name="Cree A."/>
            <person name="Ding Y."/>
            <person name="Dugan-Rocha S."/>
            <person name="Gill R."/>
            <person name="Gunaratne P."/>
            <person name="Harris R.A."/>
            <person name="Hawes A.C."/>
            <person name="Hernandez J."/>
            <person name="Hodgson A.V."/>
            <person name="Hume J."/>
            <person name="Jackson A."/>
            <person name="Khan Z.M."/>
            <person name="Kovar-Smith C."/>
            <person name="Lewis L.R."/>
            <person name="Lozado R.J."/>
            <person name="Metzker M.L."/>
            <person name="Milosavljevic A."/>
            <person name="Miner G.R."/>
            <person name="Morgan M.B."/>
            <person name="Nazareth L.V."/>
            <person name="Scott G."/>
            <person name="Sodergren E."/>
            <person name="Song X.-Z."/>
            <person name="Steffen D."/>
            <person name="Wei S."/>
            <person name="Wheeler D.A."/>
            <person name="Wright M.W."/>
            <person name="Worley K.C."/>
            <person name="Yuan Y."/>
            <person name="Zhang Z."/>
            <person name="Adams C.Q."/>
            <person name="Ansari-Lari M.A."/>
            <person name="Ayele M."/>
            <person name="Brown M.J."/>
            <person name="Chen G."/>
            <person name="Chen Z."/>
            <person name="Clendenning J."/>
            <person name="Clerc-Blankenburg K.P."/>
            <person name="Chen R."/>
            <person name="Chen Z."/>
            <person name="Davis C."/>
            <person name="Delgado O."/>
            <person name="Dinh H.H."/>
            <person name="Dong W."/>
            <person name="Draper H."/>
            <person name="Ernst S."/>
            <person name="Fu G."/>
            <person name="Gonzalez-Garay M.L."/>
            <person name="Garcia D.K."/>
            <person name="Gillett W."/>
            <person name="Gu J."/>
            <person name="Hao B."/>
            <person name="Haugen E."/>
            <person name="Havlak P."/>
            <person name="He X."/>
            <person name="Hennig S."/>
            <person name="Hu S."/>
            <person name="Huang W."/>
            <person name="Jackson L.R."/>
            <person name="Jacob L.S."/>
            <person name="Kelly S.H."/>
            <person name="Kube M."/>
            <person name="Levy R."/>
            <person name="Li Z."/>
            <person name="Liu B."/>
            <person name="Liu J."/>
            <person name="Liu W."/>
            <person name="Lu J."/>
            <person name="Maheshwari M."/>
            <person name="Nguyen B.-V."/>
            <person name="Okwuonu G.O."/>
            <person name="Palmeiri A."/>
            <person name="Pasternak S."/>
            <person name="Perez L.M."/>
            <person name="Phelps K.A."/>
            <person name="Plopper F.J."/>
            <person name="Qiang B."/>
            <person name="Raymond C."/>
            <person name="Rodriguez R."/>
            <person name="Saenphimmachak C."/>
            <person name="Santibanez J."/>
            <person name="Shen H."/>
            <person name="Shen Y."/>
            <person name="Subramanian S."/>
            <person name="Tabor P.E."/>
            <person name="Verduzco D."/>
            <person name="Waldron L."/>
            <person name="Wang J."/>
            <person name="Wang J."/>
            <person name="Wang Q."/>
            <person name="Williams G.A."/>
            <person name="Wong G.K.-S."/>
            <person name="Yao Z."/>
            <person name="Zhang J."/>
            <person name="Zhang X."/>
            <person name="Zhao G."/>
            <person name="Zhou J."/>
            <person name="Zhou Y."/>
            <person name="Nelson D."/>
            <person name="Lehrach H."/>
            <person name="Reinhardt R."/>
            <person name="Naylor S.L."/>
            <person name="Yang H."/>
            <person name="Olson M."/>
            <person name="Weinstock G."/>
            <person name="Gibbs R.A."/>
        </authorList>
    </citation>
    <scope>NUCLEOTIDE SEQUENCE [LARGE SCALE GENOMIC DNA]</scope>
</reference>
<dbReference type="EMBL" id="AC078795">
    <property type="status" value="NOT_ANNOTATED_CDS"/>
    <property type="molecule type" value="Genomic_DNA"/>
</dbReference>
<dbReference type="CCDS" id="CCDS46951.1"/>
<dbReference type="RefSeq" id="NP_001073929.1">
    <property type="nucleotide sequence ID" value="NM_001080460.3"/>
</dbReference>
<dbReference type="RefSeq" id="XP_005247478.1">
    <property type="nucleotide sequence ID" value="XM_005247421.2"/>
</dbReference>
<dbReference type="RefSeq" id="XP_006713676.1">
    <property type="nucleotide sequence ID" value="XM_006713613.5"/>
</dbReference>
<dbReference type="RefSeq" id="XP_011511050.1">
    <property type="nucleotide sequence ID" value="XM_011512748.2"/>
</dbReference>
<dbReference type="RefSeq" id="XP_054202399.1">
    <property type="nucleotide sequence ID" value="XM_054346424.1"/>
</dbReference>
<dbReference type="RefSeq" id="XP_054202400.1">
    <property type="nucleotide sequence ID" value="XM_054346425.1"/>
</dbReference>
<dbReference type="SMR" id="A6NIV6"/>
<dbReference type="BioGRID" id="131313">
    <property type="interactions" value="3"/>
</dbReference>
<dbReference type="FunCoup" id="A6NIV6">
    <property type="interactions" value="1"/>
</dbReference>
<dbReference type="IntAct" id="A6NIV6">
    <property type="interactions" value="3"/>
</dbReference>
<dbReference type="MINT" id="A6NIV6"/>
<dbReference type="STRING" id="9606.ENSP00000342188"/>
<dbReference type="GlyGen" id="A6NIV6">
    <property type="glycosylation" value="2 sites, 1 O-linked glycan (2 sites)"/>
</dbReference>
<dbReference type="iPTMnet" id="A6NIV6"/>
<dbReference type="PhosphoSitePlus" id="A6NIV6"/>
<dbReference type="BioMuta" id="LRRIQ4"/>
<dbReference type="jPOST" id="A6NIV6"/>
<dbReference type="MassIVE" id="A6NIV6"/>
<dbReference type="PaxDb" id="9606-ENSP00000342188"/>
<dbReference type="PeptideAtlas" id="A6NIV6"/>
<dbReference type="ProteomicsDB" id="1289"/>
<dbReference type="Antibodypedia" id="64434">
    <property type="antibodies" value="72 antibodies from 12 providers"/>
</dbReference>
<dbReference type="DNASU" id="344657"/>
<dbReference type="Ensembl" id="ENST00000340806.7">
    <property type="protein sequence ID" value="ENSP00000342188.6"/>
    <property type="gene ID" value="ENSG00000188306.7"/>
</dbReference>
<dbReference type="GeneID" id="344657"/>
<dbReference type="KEGG" id="hsa:344657"/>
<dbReference type="MANE-Select" id="ENST00000340806.7">
    <property type="protein sequence ID" value="ENSP00000342188.6"/>
    <property type="RefSeq nucleotide sequence ID" value="NM_001080460.3"/>
    <property type="RefSeq protein sequence ID" value="NP_001073929.1"/>
</dbReference>
<dbReference type="UCSC" id="uc003fgb.4">
    <property type="organism name" value="human"/>
</dbReference>
<dbReference type="AGR" id="HGNC:34298"/>
<dbReference type="CTD" id="344657"/>
<dbReference type="DisGeNET" id="344657"/>
<dbReference type="GeneCards" id="LRRIQ4"/>
<dbReference type="HGNC" id="HGNC:34298">
    <property type="gene designation" value="LRRIQ4"/>
</dbReference>
<dbReference type="HPA" id="ENSG00000188306">
    <property type="expression patterns" value="Tissue enriched (testis)"/>
</dbReference>
<dbReference type="neXtProt" id="NX_A6NIV6"/>
<dbReference type="PharmGKB" id="PA162394647"/>
<dbReference type="VEuPathDB" id="HostDB:ENSG00000188306"/>
<dbReference type="eggNOG" id="KOG0619">
    <property type="taxonomic scope" value="Eukaryota"/>
</dbReference>
<dbReference type="GeneTree" id="ENSGT00940000161601"/>
<dbReference type="HOGENOM" id="CLU_000288_18_23_1"/>
<dbReference type="InParanoid" id="A6NIV6"/>
<dbReference type="OMA" id="PPKEVCA"/>
<dbReference type="OrthoDB" id="1394818at2759"/>
<dbReference type="PAN-GO" id="A6NIV6">
    <property type="GO annotations" value="4 GO annotations based on evolutionary models"/>
</dbReference>
<dbReference type="PhylomeDB" id="A6NIV6"/>
<dbReference type="TreeFam" id="TF351429"/>
<dbReference type="PathwayCommons" id="A6NIV6"/>
<dbReference type="SignaLink" id="A6NIV6"/>
<dbReference type="BioGRID-ORCS" id="344657">
    <property type="hits" value="13 hits in 1140 CRISPR screens"/>
</dbReference>
<dbReference type="GenomeRNAi" id="344657"/>
<dbReference type="Pharos" id="A6NIV6">
    <property type="development level" value="Tdark"/>
</dbReference>
<dbReference type="PRO" id="PR:A6NIV6"/>
<dbReference type="Proteomes" id="UP000005640">
    <property type="component" value="Chromosome 3"/>
</dbReference>
<dbReference type="RNAct" id="A6NIV6">
    <property type="molecule type" value="protein"/>
</dbReference>
<dbReference type="Bgee" id="ENSG00000188306">
    <property type="expression patterns" value="Expressed in male germ line stem cell (sensu Vertebrata) in testis and 27 other cell types or tissues"/>
</dbReference>
<dbReference type="GO" id="GO:0005737">
    <property type="term" value="C:cytoplasm"/>
    <property type="evidence" value="ECO:0000318"/>
    <property type="project" value="GO_Central"/>
</dbReference>
<dbReference type="CDD" id="cd23766">
    <property type="entry name" value="IQCG"/>
    <property type="match status" value="1"/>
</dbReference>
<dbReference type="Gene3D" id="3.80.10.10">
    <property type="entry name" value="Ribonuclease Inhibitor"/>
    <property type="match status" value="3"/>
</dbReference>
<dbReference type="InterPro" id="IPR001611">
    <property type="entry name" value="Leu-rich_rpt"/>
</dbReference>
<dbReference type="InterPro" id="IPR003591">
    <property type="entry name" value="Leu-rich_rpt_typical-subtyp"/>
</dbReference>
<dbReference type="InterPro" id="IPR032675">
    <property type="entry name" value="LRR_dom_sf"/>
</dbReference>
<dbReference type="InterPro" id="IPR050216">
    <property type="entry name" value="LRR_domain-containing"/>
</dbReference>
<dbReference type="InterPro" id="IPR055414">
    <property type="entry name" value="LRR_R13L4/SHOC2-like"/>
</dbReference>
<dbReference type="PANTHER" id="PTHR48051">
    <property type="match status" value="1"/>
</dbReference>
<dbReference type="PANTHER" id="PTHR48051:SF1">
    <property type="entry name" value="RAS SUPPRESSOR PROTEIN 1"/>
    <property type="match status" value="1"/>
</dbReference>
<dbReference type="Pfam" id="PF23598">
    <property type="entry name" value="LRR_14"/>
    <property type="match status" value="1"/>
</dbReference>
<dbReference type="Pfam" id="PF13855">
    <property type="entry name" value="LRR_8"/>
    <property type="match status" value="4"/>
</dbReference>
<dbReference type="PRINTS" id="PR00019">
    <property type="entry name" value="LEURICHRPT"/>
</dbReference>
<dbReference type="SMART" id="SM00364">
    <property type="entry name" value="LRR_BAC"/>
    <property type="match status" value="8"/>
</dbReference>
<dbReference type="SMART" id="SM00369">
    <property type="entry name" value="LRR_TYP"/>
    <property type="match status" value="15"/>
</dbReference>
<dbReference type="SUPFAM" id="SSF52058">
    <property type="entry name" value="L domain-like"/>
    <property type="match status" value="2"/>
</dbReference>
<dbReference type="PROSITE" id="PS50096">
    <property type="entry name" value="IQ"/>
    <property type="match status" value="1"/>
</dbReference>
<dbReference type="PROSITE" id="PS51450">
    <property type="entry name" value="LRR"/>
    <property type="match status" value="17"/>
</dbReference>